<proteinExistence type="inferred from homology"/>
<gene>
    <name evidence="1" type="primary">argO</name>
    <name type="ordered locus">YpAngola_A3819</name>
</gene>
<dbReference type="EMBL" id="CP000901">
    <property type="protein sequence ID" value="ABX86192.1"/>
    <property type="molecule type" value="Genomic_DNA"/>
</dbReference>
<dbReference type="RefSeq" id="WP_002209960.1">
    <property type="nucleotide sequence ID" value="NZ_CP009935.1"/>
</dbReference>
<dbReference type="GeneID" id="57973722"/>
<dbReference type="KEGG" id="ypg:YpAngola_A3819"/>
<dbReference type="PATRIC" id="fig|349746.12.peg.535"/>
<dbReference type="GO" id="GO:0005886">
    <property type="term" value="C:plasma membrane"/>
    <property type="evidence" value="ECO:0007669"/>
    <property type="project" value="UniProtKB-SubCell"/>
</dbReference>
<dbReference type="GO" id="GO:0061459">
    <property type="term" value="F:L-arginine transmembrane transporter activity"/>
    <property type="evidence" value="ECO:0007669"/>
    <property type="project" value="UniProtKB-UniRule"/>
</dbReference>
<dbReference type="HAMAP" id="MF_01901">
    <property type="entry name" value="ArgO"/>
    <property type="match status" value="1"/>
</dbReference>
<dbReference type="InterPro" id="IPR023445">
    <property type="entry name" value="Arg_export_ArgO_enterobac"/>
</dbReference>
<dbReference type="InterPro" id="IPR001123">
    <property type="entry name" value="LeuE-type"/>
</dbReference>
<dbReference type="InterPro" id="IPR004777">
    <property type="entry name" value="Lys/arg_exporter"/>
</dbReference>
<dbReference type="NCBIfam" id="TIGR00948">
    <property type="entry name" value="2a75"/>
    <property type="match status" value="1"/>
</dbReference>
<dbReference type="NCBIfam" id="NF006801">
    <property type="entry name" value="PRK09304.1"/>
    <property type="match status" value="1"/>
</dbReference>
<dbReference type="PANTHER" id="PTHR30086">
    <property type="entry name" value="ARGININE EXPORTER PROTEIN ARGO"/>
    <property type="match status" value="1"/>
</dbReference>
<dbReference type="PANTHER" id="PTHR30086:SF20">
    <property type="entry name" value="ARGININE EXPORTER PROTEIN ARGO-RELATED"/>
    <property type="match status" value="1"/>
</dbReference>
<dbReference type="Pfam" id="PF01810">
    <property type="entry name" value="LysE"/>
    <property type="match status" value="1"/>
</dbReference>
<sequence length="205" mass="22164">MLAVYLHGFILSAAMILPLGPQNVFVMNQGIKRQHHLMSASLCALSDIILICAGIFGGSALLSRSPLLLALVTWGGVAFLMWYGWGALMAAWRGDGVASSATSVTQGRWRILVTLLAVTWLNPHVYLDTFVVLGSLGGQLLPDIRPWFALGAVTASIVWFFALALLAAWLSPWLNRPVAQRIINLFVGGVMGFIAFQLARQGFGL</sequence>
<reference key="1">
    <citation type="journal article" date="2010" name="J. Bacteriol.">
        <title>Genome sequence of the deep-rooted Yersinia pestis strain Angola reveals new insights into the evolution and pangenome of the plague bacterium.</title>
        <authorList>
            <person name="Eppinger M."/>
            <person name="Worsham P.L."/>
            <person name="Nikolich M.P."/>
            <person name="Riley D.R."/>
            <person name="Sebastian Y."/>
            <person name="Mou S."/>
            <person name="Achtman M."/>
            <person name="Lindler L.E."/>
            <person name="Ravel J."/>
        </authorList>
    </citation>
    <scope>NUCLEOTIDE SEQUENCE [LARGE SCALE GENOMIC DNA]</scope>
    <source>
        <strain>Angola</strain>
    </source>
</reference>
<name>ARGO_YERPG</name>
<keyword id="KW-0029">Amino-acid transport</keyword>
<keyword id="KW-0997">Cell inner membrane</keyword>
<keyword id="KW-1003">Cell membrane</keyword>
<keyword id="KW-0472">Membrane</keyword>
<keyword id="KW-0812">Transmembrane</keyword>
<keyword id="KW-1133">Transmembrane helix</keyword>
<keyword id="KW-0813">Transport</keyword>
<comment type="function">
    <text evidence="1">Involved in the export of arginine. Important to control the intracellular level of arginine and the correct balance between arginine and lysine.</text>
</comment>
<comment type="catalytic activity">
    <reaction evidence="1">
        <text>L-arginine(in) = L-arginine(out)</text>
        <dbReference type="Rhea" id="RHEA:32143"/>
        <dbReference type="ChEBI" id="CHEBI:32682"/>
    </reaction>
    <physiologicalReaction direction="left-to-right" evidence="1">
        <dbReference type="Rhea" id="RHEA:32144"/>
    </physiologicalReaction>
</comment>
<comment type="subcellular location">
    <subcellularLocation>
        <location evidence="1">Cell inner membrane</location>
        <topology evidence="1">Multi-pass membrane protein</topology>
    </subcellularLocation>
</comment>
<comment type="similarity">
    <text evidence="1">Belongs to the LysE/ArgO transporter (TC 2.A.75) family.</text>
</comment>
<evidence type="ECO:0000255" key="1">
    <source>
        <dbReference type="HAMAP-Rule" id="MF_01901"/>
    </source>
</evidence>
<protein>
    <recommendedName>
        <fullName evidence="1">Arginine exporter protein ArgO</fullName>
    </recommendedName>
</protein>
<feature type="chain" id="PRO_1000188727" description="Arginine exporter protein ArgO">
    <location>
        <begin position="1"/>
        <end position="205"/>
    </location>
</feature>
<feature type="transmembrane region" description="Helical" evidence="1">
    <location>
        <begin position="1"/>
        <end position="21"/>
    </location>
</feature>
<feature type="transmembrane region" description="Helical" evidence="1">
    <location>
        <begin position="42"/>
        <end position="62"/>
    </location>
</feature>
<feature type="transmembrane region" description="Helical" evidence="1">
    <location>
        <begin position="67"/>
        <end position="87"/>
    </location>
</feature>
<feature type="transmembrane region" description="Helical" evidence="1">
    <location>
        <begin position="111"/>
        <end position="131"/>
    </location>
</feature>
<feature type="transmembrane region" description="Helical" evidence="1">
    <location>
        <begin position="147"/>
        <end position="167"/>
    </location>
</feature>
<feature type="transmembrane region" description="Helical" evidence="1">
    <location>
        <begin position="185"/>
        <end position="205"/>
    </location>
</feature>
<accession>A9R4J5</accession>
<organism>
    <name type="scientific">Yersinia pestis bv. Antiqua (strain Angola)</name>
    <dbReference type="NCBI Taxonomy" id="349746"/>
    <lineage>
        <taxon>Bacteria</taxon>
        <taxon>Pseudomonadati</taxon>
        <taxon>Pseudomonadota</taxon>
        <taxon>Gammaproteobacteria</taxon>
        <taxon>Enterobacterales</taxon>
        <taxon>Yersiniaceae</taxon>
        <taxon>Yersinia</taxon>
    </lineage>
</organism>